<comment type="function">
    <text evidence="1">Binds voltage-independently at site-4 of sodium channels (Nav) and shift the voltage of activation toward more negative potentials thereby affecting sodium channel activation and promoting spontaneous and repetitive firing.</text>
</comment>
<comment type="subcellular location">
    <subcellularLocation>
        <location evidence="7">Secreted</location>
    </subcellularLocation>
</comment>
<comment type="tissue specificity">
    <text evidence="7">Expressed by the venom gland.</text>
</comment>
<comment type="domain">
    <text evidence="6">Has the structural arrangement of an alpha-helix connected to antiparallel beta-sheets by disulfide bonds (CS-alpha/beta).</text>
</comment>
<comment type="similarity">
    <text evidence="6">Belongs to the long (4 C-C) scorpion toxin superfamily. Sodium channel inhibitor family. Beta subfamily.</text>
</comment>
<proteinExistence type="inferred from homology"/>
<sequence length="87" mass="10167">MKILFLIILTAFFIGVHCKHGYPIIRAGRDKGCKVSCVINNQYCDTECKQLKGRRGYCYFWRLACFCEYLPDYVPTWSRATNKCKAK</sequence>
<organism>
    <name type="scientific">Lychas mucronatus</name>
    <name type="common">Chinese swimming scorpion</name>
    <dbReference type="NCBI Taxonomy" id="172552"/>
    <lineage>
        <taxon>Eukaryota</taxon>
        <taxon>Metazoa</taxon>
        <taxon>Ecdysozoa</taxon>
        <taxon>Arthropoda</taxon>
        <taxon>Chelicerata</taxon>
        <taxon>Arachnida</taxon>
        <taxon>Scorpiones</taxon>
        <taxon>Buthida</taxon>
        <taxon>Buthoidea</taxon>
        <taxon>Buthidae</taxon>
        <taxon>Lychas</taxon>
    </lineage>
</organism>
<feature type="signal peptide" evidence="3">
    <location>
        <begin position="1"/>
        <end position="18"/>
    </location>
</feature>
<feature type="peptide" id="PRO_0000403818" description="Neurotoxin LmNaTx64.1" evidence="7">
    <location>
        <begin position="19"/>
        <end position="84"/>
    </location>
</feature>
<feature type="domain" description="LCN-type CS-alpha/beta" evidence="4">
    <location>
        <begin position="19"/>
        <end position="85"/>
    </location>
</feature>
<feature type="modified residue" description="Cysteine amide" evidence="2">
    <location>
        <position position="84"/>
    </location>
</feature>
<feature type="disulfide bond" evidence="4">
    <location>
        <begin position="33"/>
        <end position="84"/>
    </location>
</feature>
<feature type="disulfide bond" evidence="4">
    <location>
        <begin position="37"/>
        <end position="58"/>
    </location>
</feature>
<feature type="disulfide bond" evidence="4">
    <location>
        <begin position="44"/>
        <end position="65"/>
    </location>
</feature>
<feature type="disulfide bond" evidence="4">
    <location>
        <begin position="48"/>
        <end position="67"/>
    </location>
</feature>
<protein>
    <recommendedName>
        <fullName evidence="5">Neurotoxin LmNaTx64.1</fullName>
    </recommendedName>
</protein>
<dbReference type="EMBL" id="GT028975">
    <property type="status" value="NOT_ANNOTATED_CDS"/>
    <property type="molecule type" value="mRNA"/>
</dbReference>
<dbReference type="SMR" id="P0CI58"/>
<dbReference type="GO" id="GO:0005576">
    <property type="term" value="C:extracellular region"/>
    <property type="evidence" value="ECO:0007669"/>
    <property type="project" value="UniProtKB-SubCell"/>
</dbReference>
<dbReference type="GO" id="GO:0019871">
    <property type="term" value="F:sodium channel inhibitor activity"/>
    <property type="evidence" value="ECO:0007669"/>
    <property type="project" value="InterPro"/>
</dbReference>
<dbReference type="GO" id="GO:0090729">
    <property type="term" value="F:toxin activity"/>
    <property type="evidence" value="ECO:0007669"/>
    <property type="project" value="UniProtKB-KW"/>
</dbReference>
<dbReference type="GO" id="GO:0006952">
    <property type="term" value="P:defense response"/>
    <property type="evidence" value="ECO:0007669"/>
    <property type="project" value="InterPro"/>
</dbReference>
<dbReference type="CDD" id="cd23106">
    <property type="entry name" value="neurotoxins_LC_scorpion"/>
    <property type="match status" value="1"/>
</dbReference>
<dbReference type="FunFam" id="3.30.30.10:FF:000002">
    <property type="entry name" value="Alpha-like toxin BmK-M1"/>
    <property type="match status" value="1"/>
</dbReference>
<dbReference type="Gene3D" id="3.30.30.10">
    <property type="entry name" value="Knottin, scorpion toxin-like"/>
    <property type="match status" value="1"/>
</dbReference>
<dbReference type="InterPro" id="IPR044062">
    <property type="entry name" value="LCN-type_CS_alpha_beta_dom"/>
</dbReference>
<dbReference type="InterPro" id="IPR003614">
    <property type="entry name" value="Scorpion_toxin-like"/>
</dbReference>
<dbReference type="InterPro" id="IPR036574">
    <property type="entry name" value="Scorpion_toxin-like_sf"/>
</dbReference>
<dbReference type="InterPro" id="IPR018218">
    <property type="entry name" value="Scorpion_toxinL"/>
</dbReference>
<dbReference type="InterPro" id="IPR002061">
    <property type="entry name" value="Scorpion_toxinL/defensin"/>
</dbReference>
<dbReference type="Pfam" id="PF00537">
    <property type="entry name" value="Toxin_3"/>
    <property type="match status" value="1"/>
</dbReference>
<dbReference type="PRINTS" id="PR00285">
    <property type="entry name" value="SCORPNTOXIN"/>
</dbReference>
<dbReference type="SMART" id="SM00505">
    <property type="entry name" value="Knot1"/>
    <property type="match status" value="1"/>
</dbReference>
<dbReference type="SUPFAM" id="SSF57095">
    <property type="entry name" value="Scorpion toxin-like"/>
    <property type="match status" value="1"/>
</dbReference>
<dbReference type="PROSITE" id="PS51863">
    <property type="entry name" value="LCN_CSAB"/>
    <property type="match status" value="1"/>
</dbReference>
<evidence type="ECO:0000250" key="1"/>
<evidence type="ECO:0000250" key="2">
    <source>
        <dbReference type="UniProtKB" id="P15226"/>
    </source>
</evidence>
<evidence type="ECO:0000255" key="3"/>
<evidence type="ECO:0000255" key="4">
    <source>
        <dbReference type="PROSITE-ProRule" id="PRU01210"/>
    </source>
</evidence>
<evidence type="ECO:0000303" key="5">
    <source>
    </source>
</evidence>
<evidence type="ECO:0000305" key="6"/>
<evidence type="ECO:0000305" key="7">
    <source>
    </source>
</evidence>
<accession>P0CI58</accession>
<reference key="1">
    <citation type="journal article" date="2010" name="BMC Genomics">
        <title>Comparative venom gland transcriptome analysis of the scorpion Lychas mucronatus reveals intraspecific toxic gene diversity and new venomous components.</title>
        <authorList>
            <person name="Zhao R."/>
            <person name="Ma Y."/>
            <person name="He Y."/>
            <person name="Di Z."/>
            <person name="Wu Y.-L."/>
            <person name="Cao Z.-J."/>
            <person name="Li W.-X."/>
        </authorList>
    </citation>
    <scope>NUCLEOTIDE SEQUENCE [MRNA]</scope>
    <source>
        <strain>Yunnan</strain>
        <tissue>Venom gland</tissue>
    </source>
</reference>
<keyword id="KW-0027">Amidation</keyword>
<keyword id="KW-1015">Disulfide bond</keyword>
<keyword id="KW-0872">Ion channel impairing toxin</keyword>
<keyword id="KW-0528">Neurotoxin</keyword>
<keyword id="KW-0964">Secreted</keyword>
<keyword id="KW-0732">Signal</keyword>
<keyword id="KW-0800">Toxin</keyword>
<keyword id="KW-0738">Voltage-gated sodium channel impairing toxin</keyword>
<name>SNA64_LYCMC</name>